<evidence type="ECO:0000255" key="1">
    <source>
        <dbReference type="HAMAP-Rule" id="MF_00480"/>
    </source>
</evidence>
<evidence type="ECO:0000305" key="2"/>
<protein>
    <recommendedName>
        <fullName evidence="1">Small ribosomal subunit protein uS7</fullName>
    </recommendedName>
    <alternativeName>
        <fullName evidence="2">30S ribosomal protein S7</fullName>
    </alternativeName>
</protein>
<keyword id="KW-0687">Ribonucleoprotein</keyword>
<keyword id="KW-0689">Ribosomal protein</keyword>
<keyword id="KW-0694">RNA-binding</keyword>
<keyword id="KW-0699">rRNA-binding</keyword>
<keyword id="KW-0820">tRNA-binding</keyword>
<accession>Q3YSU4</accession>
<comment type="function">
    <text evidence="1">One of the primary rRNA binding proteins, it binds directly to 16S rRNA where it nucleates assembly of the head domain of the 30S subunit. Is located at the subunit interface close to the decoding center, probably blocks exit of the E-site tRNA.</text>
</comment>
<comment type="subunit">
    <text evidence="1">Part of the 30S ribosomal subunit. Contacts proteins S9 and S11.</text>
</comment>
<comment type="similarity">
    <text evidence="1">Belongs to the universal ribosomal protein uS7 family.</text>
</comment>
<gene>
    <name evidence="1" type="primary">rpsG</name>
    <name type="ordered locus">Ecaj_0160</name>
</gene>
<feature type="chain" id="PRO_0000226499" description="Small ribosomal subunit protein uS7">
    <location>
        <begin position="1"/>
        <end position="160"/>
    </location>
</feature>
<dbReference type="EMBL" id="CP000107">
    <property type="protein sequence ID" value="AAZ68211.1"/>
    <property type="molecule type" value="Genomic_DNA"/>
</dbReference>
<dbReference type="RefSeq" id="WP_011304289.1">
    <property type="nucleotide sequence ID" value="NC_007354.1"/>
</dbReference>
<dbReference type="SMR" id="Q3YSU4"/>
<dbReference type="FunCoup" id="Q3YSU4">
    <property type="interactions" value="363"/>
</dbReference>
<dbReference type="STRING" id="269484.Ecaj_0160"/>
<dbReference type="KEGG" id="ecn:Ecaj_0160"/>
<dbReference type="eggNOG" id="COG0049">
    <property type="taxonomic scope" value="Bacteria"/>
</dbReference>
<dbReference type="HOGENOM" id="CLU_072226_1_1_5"/>
<dbReference type="InParanoid" id="Q3YSU4"/>
<dbReference type="Proteomes" id="UP000000435">
    <property type="component" value="Chromosome"/>
</dbReference>
<dbReference type="GO" id="GO:0015935">
    <property type="term" value="C:small ribosomal subunit"/>
    <property type="evidence" value="ECO:0007669"/>
    <property type="project" value="InterPro"/>
</dbReference>
<dbReference type="GO" id="GO:0019843">
    <property type="term" value="F:rRNA binding"/>
    <property type="evidence" value="ECO:0007669"/>
    <property type="project" value="UniProtKB-UniRule"/>
</dbReference>
<dbReference type="GO" id="GO:0003735">
    <property type="term" value="F:structural constituent of ribosome"/>
    <property type="evidence" value="ECO:0007669"/>
    <property type="project" value="InterPro"/>
</dbReference>
<dbReference type="GO" id="GO:0000049">
    <property type="term" value="F:tRNA binding"/>
    <property type="evidence" value="ECO:0007669"/>
    <property type="project" value="UniProtKB-UniRule"/>
</dbReference>
<dbReference type="GO" id="GO:0006412">
    <property type="term" value="P:translation"/>
    <property type="evidence" value="ECO:0007669"/>
    <property type="project" value="UniProtKB-UniRule"/>
</dbReference>
<dbReference type="CDD" id="cd14869">
    <property type="entry name" value="uS7_Bacteria"/>
    <property type="match status" value="1"/>
</dbReference>
<dbReference type="FunFam" id="1.10.455.10:FF:000001">
    <property type="entry name" value="30S ribosomal protein S7"/>
    <property type="match status" value="1"/>
</dbReference>
<dbReference type="Gene3D" id="1.10.455.10">
    <property type="entry name" value="Ribosomal protein S7 domain"/>
    <property type="match status" value="1"/>
</dbReference>
<dbReference type="HAMAP" id="MF_00480_B">
    <property type="entry name" value="Ribosomal_uS7_B"/>
    <property type="match status" value="1"/>
</dbReference>
<dbReference type="InterPro" id="IPR000235">
    <property type="entry name" value="Ribosomal_uS7"/>
</dbReference>
<dbReference type="InterPro" id="IPR005717">
    <property type="entry name" value="Ribosomal_uS7_bac/org-type"/>
</dbReference>
<dbReference type="InterPro" id="IPR023798">
    <property type="entry name" value="Ribosomal_uS7_dom"/>
</dbReference>
<dbReference type="InterPro" id="IPR036823">
    <property type="entry name" value="Ribosomal_uS7_dom_sf"/>
</dbReference>
<dbReference type="NCBIfam" id="TIGR01029">
    <property type="entry name" value="rpsG_bact"/>
    <property type="match status" value="1"/>
</dbReference>
<dbReference type="PANTHER" id="PTHR11205">
    <property type="entry name" value="RIBOSOMAL PROTEIN S7"/>
    <property type="match status" value="1"/>
</dbReference>
<dbReference type="Pfam" id="PF00177">
    <property type="entry name" value="Ribosomal_S7"/>
    <property type="match status" value="1"/>
</dbReference>
<dbReference type="PIRSF" id="PIRSF002122">
    <property type="entry name" value="RPS7p_RPS7a_RPS5e_RPS7o"/>
    <property type="match status" value="1"/>
</dbReference>
<dbReference type="SUPFAM" id="SSF47973">
    <property type="entry name" value="Ribosomal protein S7"/>
    <property type="match status" value="1"/>
</dbReference>
<reference key="1">
    <citation type="journal article" date="2006" name="J. Bacteriol.">
        <title>The genome of the obligately intracellular bacterium Ehrlichia canis reveals themes of complex membrane structure and immune evasion strategies.</title>
        <authorList>
            <person name="Mavromatis K."/>
            <person name="Doyle C.K."/>
            <person name="Lykidis A."/>
            <person name="Ivanova N."/>
            <person name="Francino M.P."/>
            <person name="Chain P."/>
            <person name="Shin M."/>
            <person name="Malfatti S."/>
            <person name="Larimer F."/>
            <person name="Copeland A."/>
            <person name="Detter J.C."/>
            <person name="Land M."/>
            <person name="Richardson P.M."/>
            <person name="Yu X.J."/>
            <person name="Walker D.H."/>
            <person name="McBride J.W."/>
            <person name="Kyrpides N.C."/>
        </authorList>
    </citation>
    <scope>NUCLEOTIDE SEQUENCE [LARGE SCALE GENOMIC DNA]</scope>
    <source>
        <strain>Jake</strain>
    </source>
</reference>
<sequence>MSRRRRASKRVISPDSKYNSVLLARFINVIMRSGERSIAEKIVYGALNKAEARLGEGAMSIFNAALNNVMPQMEVRSRRIGGVTYQVPVEVKEDRAVSLALRWIFKAAAAARKRSNKMYMDCLCNELLEAYNKRGGAYKMREEKYKMAEANKAFSHFRFN</sequence>
<proteinExistence type="inferred from homology"/>
<organism>
    <name type="scientific">Ehrlichia canis (strain Jake)</name>
    <dbReference type="NCBI Taxonomy" id="269484"/>
    <lineage>
        <taxon>Bacteria</taxon>
        <taxon>Pseudomonadati</taxon>
        <taxon>Pseudomonadota</taxon>
        <taxon>Alphaproteobacteria</taxon>
        <taxon>Rickettsiales</taxon>
        <taxon>Anaplasmataceae</taxon>
        <taxon>Ehrlichia</taxon>
    </lineage>
</organism>
<name>RS7_EHRCJ</name>